<sequence length="669" mass="74809">MATSEETAAGYVIGVYFHSVHVHCRIIVWQVNFLPLDPNDGETECYFVVDTLTKEAMERMPEIQECVPSITEHARDLAIWELALRLQNQTIVKAVRTASLPVVLIMTVGRIVNDVIPCPNVRTPRPLACAYLHCEATVTFEVPLTGPAASTGTWHSSIYRECAISAIEICLKTSRGIYSCQSNEAPEAKREKRGLDISDVFVCLTYDIPIAGRVLSLLVPHAPAFHVLWINEDSKWNGAAVEFFRALHHKLFSERNGIPPLWLYVFPGAVEEGTAFAPLLPAFPCIPLRYGSPTSLDRASVQWDLFEPHILTHFDGIKRTSLADTVFGYDSLAISRECEDQYVWPTPVTDININLCTDSDTMAIVREPSGLVAVNLEALLRTDSVLSRVSSIVSLDTLLDLSTPECRRSVELRYNSLLSTVLSWSTSRGHKWAAIVKWKLFFLVQALEPEQWSPEFKDLKRACQMAGFTLKGGTSGDLVFSSHANLLFSTSMGYFLHAGSPRSTAGTGGEPNPRHITGPDTEGNGEHRNSPNLCGFVTWLQSLTTCIERALNMPPDTSWLQLIEEVIPLYFHRRRQTSFWLIPLSHCEGIPVCPPLPFDCLAPRLFIVTKSGPMCYRAGFSLPVDVNYLFYLEQTLKAVRQVSPQEHNPQDAKEMTLQLEAWTRLLSLF</sequence>
<organism>
    <name type="scientific">Human herpesvirus 8 type P (isolate GK18)</name>
    <name type="common">HHV-8</name>
    <name type="synonym">Kaposi's sarcoma-associated herpesvirus</name>
    <dbReference type="NCBI Taxonomy" id="868565"/>
    <lineage>
        <taxon>Viruses</taxon>
        <taxon>Duplodnaviria</taxon>
        <taxon>Heunggongvirae</taxon>
        <taxon>Peploviricota</taxon>
        <taxon>Herviviricetes</taxon>
        <taxon>Herpesvirales</taxon>
        <taxon>Orthoherpesviridae</taxon>
        <taxon>Gammaherpesvirinae</taxon>
        <taxon>Rhadinovirus</taxon>
        <taxon>Rhadinovirus humangamma8</taxon>
        <taxon>Human herpesvirus 8</taxon>
    </lineage>
</organism>
<dbReference type="EMBL" id="AF148805">
    <property type="protein sequence ID" value="ABD28891.1"/>
    <property type="molecule type" value="Genomic_DNA"/>
</dbReference>
<dbReference type="RefSeq" id="YP_001129393.1">
    <property type="nucleotide sequence ID" value="NC_009333.1"/>
</dbReference>
<dbReference type="DNASU" id="4961438"/>
<dbReference type="GeneID" id="4961438"/>
<dbReference type="KEGG" id="vg:4961438"/>
<dbReference type="Proteomes" id="UP000000942">
    <property type="component" value="Segment"/>
</dbReference>
<dbReference type="GO" id="GO:0042025">
    <property type="term" value="C:host cell nucleus"/>
    <property type="evidence" value="ECO:0007669"/>
    <property type="project" value="UniProtKB-SubCell"/>
</dbReference>
<dbReference type="GO" id="GO:0039686">
    <property type="term" value="P:bidirectional double-stranded viral DNA replication"/>
    <property type="evidence" value="ECO:0000314"/>
    <property type="project" value="UniProtKB"/>
</dbReference>
<dbReference type="GO" id="GO:0006260">
    <property type="term" value="P:DNA replication"/>
    <property type="evidence" value="ECO:0007669"/>
    <property type="project" value="UniProtKB-KW"/>
</dbReference>
<dbReference type="HAMAP" id="MF_04010">
    <property type="entry name" value="HSV_HEPA"/>
    <property type="match status" value="1"/>
</dbReference>
<dbReference type="InterPro" id="IPR008650">
    <property type="entry name" value="Helicase-primas_cplx_Herpesvir"/>
</dbReference>
<dbReference type="InterPro" id="IPR004996">
    <property type="entry name" value="HSV_HEPA"/>
</dbReference>
<dbReference type="Pfam" id="PF05774">
    <property type="entry name" value="Herpes_heli_pri"/>
    <property type="match status" value="1"/>
</dbReference>
<dbReference type="Pfam" id="PF03324">
    <property type="entry name" value="Herpes_HEPA"/>
    <property type="match status" value="1"/>
</dbReference>
<organismHost>
    <name type="scientific">Homo sapiens</name>
    <name type="common">Human</name>
    <dbReference type="NCBI Taxonomy" id="9606"/>
</organismHost>
<protein>
    <recommendedName>
        <fullName evidence="1">DNA helicase/primase complex-associated protein</fullName>
        <shortName evidence="1">HEPA</shortName>
    </recommendedName>
    <alternativeName>
        <fullName evidence="1">Primase-associated factor</fullName>
    </alternativeName>
</protein>
<accession>Q2HR92</accession>
<reference key="1">
    <citation type="journal article" date="1999" name="J. Virol.">
        <title>Identification of a spliced gene from Kaposi's sarcoma-associated herpesvirus encoding a protein with similarities to latent membrane proteins 1 and 2A of Epstein-Barr virus.</title>
        <authorList>
            <person name="Glenn M."/>
            <person name="Rainbow L."/>
            <person name="Aurade F."/>
            <person name="Davison A."/>
            <person name="Schulz T.F."/>
        </authorList>
    </citation>
    <scope>NUCLEOTIDE SEQUENCE [LARGE SCALE GENOMIC DNA]</scope>
</reference>
<reference key="2">
    <citation type="journal article" date="2006" name="J. Gen. Virol.">
        <title>Kaposi's sarcoma-associated herpesvirus immune modulation: an overview.</title>
        <authorList>
            <person name="Rezaee S.A.R."/>
            <person name="Cunningham C."/>
            <person name="Davison A.J."/>
            <person name="Blackbourn D.J."/>
        </authorList>
    </citation>
    <scope>NUCLEOTIDE SEQUENCE [LARGE SCALE GENOMIC DNA]</scope>
</reference>
<feature type="chain" id="PRO_0000423782" description="DNA helicase/primase complex-associated protein">
    <location>
        <begin position="1"/>
        <end position="669"/>
    </location>
</feature>
<feature type="region of interest" description="Disordered" evidence="2">
    <location>
        <begin position="502"/>
        <end position="526"/>
    </location>
</feature>
<name>HEPA_HHV8P</name>
<proteinExistence type="inferred from homology"/>
<gene>
    <name type="primary">ORF40</name>
</gene>
<evidence type="ECO:0000255" key="1">
    <source>
        <dbReference type="HAMAP-Rule" id="MF_04010"/>
    </source>
</evidence>
<evidence type="ECO:0000256" key="2">
    <source>
        <dbReference type="SAM" id="MobiDB-lite"/>
    </source>
</evidence>
<keyword id="KW-0235">DNA replication</keyword>
<keyword id="KW-1048">Host nucleus</keyword>
<keyword id="KW-1185">Reference proteome</keyword>
<comment type="function">
    <text evidence="1">Component of the helicase/primase complex. Unwinds the DNA at the replication forks and generates single-stranded DNA for both leading and lagging strand synthesis. The primase synthesizes short RNA primers on the lagging strand that the polymerase presumably elongates using dNTPs. The primase-associated factor has no known catalytic activity in the complex and may serve to facilitate the formation of the replisome by directly interacting with the origin-binding protein and the polymerase.</text>
</comment>
<comment type="subunit">
    <text evidence="1">Associates with the primase and the helicase to form the helicase-primase complex. Interacts with the origin-binding protein. Interacts with the polymerase catalytic subunit.</text>
</comment>
<comment type="subcellular location">
    <subcellularLocation>
        <location evidence="1">Host nucleus</location>
    </subcellularLocation>
</comment>
<comment type="similarity">
    <text evidence="1">Belongs to the herpesviridae HEPA family.</text>
</comment>